<gene>
    <name type="primary">ORF68</name>
</gene>
<organismHost>
    <name type="scientific">Homo sapiens</name>
    <name type="common">Human</name>
    <dbReference type="NCBI Taxonomy" id="9606"/>
</organismHost>
<reference key="1">
    <citation type="journal article" date="1999" name="J. Virol.">
        <title>Identification of a spliced gene from Kaposi's sarcoma-associated herpesvirus encoding a protein with similarities to latent membrane proteins 1 and 2A of Epstein-Barr virus.</title>
        <authorList>
            <person name="Glenn M."/>
            <person name="Rainbow L."/>
            <person name="Aurade F."/>
            <person name="Davison A."/>
            <person name="Schulz T.F."/>
        </authorList>
    </citation>
    <scope>NUCLEOTIDE SEQUENCE [LARGE SCALE GENOMIC DNA]</scope>
</reference>
<reference key="2">
    <citation type="journal article" date="2006" name="J. Gen. Virol.">
        <title>Kaposi's sarcoma-associated herpesvirus immune modulation: an overview.</title>
        <authorList>
            <person name="Rezaee S.A.R."/>
            <person name="Cunningham C."/>
            <person name="Davison A.J."/>
            <person name="Blackbourn D.J."/>
        </authorList>
    </citation>
    <scope>NUCLEOTIDE SEQUENCE [LARGE SCALE GENOMIC DNA]</scope>
</reference>
<reference key="3">
    <citation type="journal article" date="2018" name="J. Virol.">
        <title>Kaposi's Sarcoma-Associated Herpesvirus ORF68 Is a DNA Binding Protein Required for Viral Genome Cleavage and Packaging.</title>
        <authorList>
            <person name="Gardner M.R."/>
            <person name="Glaunsinger B.A."/>
        </authorList>
    </citation>
    <scope>FUNCTION</scope>
    <scope>SUBCELLULAR LOCATION</scope>
    <scope>DISRUPTION PHENOTYPE</scope>
</reference>
<reference key="4">
    <citation type="journal article" date="2021" name="Elife">
        <title>A pentameric protein ring with novel architecture is required for herpesviral packaging.</title>
        <authorList>
            <person name="Didychuk A.L."/>
            <person name="Gates S.N."/>
            <person name="Gardner M.R."/>
            <person name="Strong L.M."/>
            <person name="Martin A."/>
            <person name="Glaunsinger B.A."/>
        </authorList>
    </citation>
    <scope>FUNCTION</scope>
    <scope>SUBUNIT</scope>
    <scope>MUTAGENESIS OF CYS-52; CYS-373; CYS-415 AND HIS-452</scope>
    <scope>ZINC-FINGER</scope>
</reference>
<proteinExistence type="evidence at protein level"/>
<dbReference type="EMBL" id="AF148805">
    <property type="protein sequence ID" value="AAD46496.2"/>
    <property type="molecule type" value="Genomic_DNA"/>
</dbReference>
<dbReference type="RefSeq" id="YP_001129426.1">
    <property type="nucleotide sequence ID" value="NC_009333.1"/>
</dbReference>
<dbReference type="SMR" id="F5HF47"/>
<dbReference type="DNASU" id="4961470"/>
<dbReference type="KEGG" id="vg:4961470"/>
<dbReference type="Proteomes" id="UP000000942">
    <property type="component" value="Segment"/>
</dbReference>
<dbReference type="GO" id="GO:0030430">
    <property type="term" value="C:host cell cytoplasm"/>
    <property type="evidence" value="ECO:0007669"/>
    <property type="project" value="UniProtKB-SubCell"/>
</dbReference>
<dbReference type="GO" id="GO:0042025">
    <property type="term" value="C:host cell nucleus"/>
    <property type="evidence" value="ECO:0007669"/>
    <property type="project" value="UniProtKB-SubCell"/>
</dbReference>
<dbReference type="GO" id="GO:0019031">
    <property type="term" value="C:viral envelope"/>
    <property type="evidence" value="ECO:0007669"/>
    <property type="project" value="InterPro"/>
</dbReference>
<dbReference type="GO" id="GO:0008270">
    <property type="term" value="F:zinc ion binding"/>
    <property type="evidence" value="ECO:0007669"/>
    <property type="project" value="UniProtKB-KW"/>
</dbReference>
<dbReference type="InterPro" id="IPR002597">
    <property type="entry name" value="Herpes_env"/>
</dbReference>
<dbReference type="Pfam" id="PF01673">
    <property type="entry name" value="Herpes_env"/>
    <property type="match status" value="2"/>
</dbReference>
<dbReference type="PROSITE" id="PS51988">
    <property type="entry name" value="HERPESVIRUS_UL32"/>
    <property type="match status" value="1"/>
</dbReference>
<comment type="function">
    <text evidence="3 4">Plays a role in efficient localization of neo-synthesized capsids to nuclear replication compartments, thereby controlling cleavage and packaging of virus genomic DNA (PubMed:29875246). Facilitates thereby the transfer of newly replicated viral genomes to the packaging motor (PubMed:33554858).</text>
</comment>
<comment type="subunit">
    <text evidence="4">Forms a homopentameric ring.</text>
</comment>
<comment type="subcellular location">
    <subcellularLocation>
        <location evidence="1">Host cytoplasm</location>
    </subcellularLocation>
    <subcellularLocation>
        <location evidence="3">Host nucleus</location>
    </subcellularLocation>
    <text evidence="3">Localizes to viral replication compartments.</text>
</comment>
<comment type="disruption phenotype">
    <text evidence="3">Deletion mutants maintain viral DNA replication and late gene expression but does not produce infectious virions. In addition, viral DNA is not cleaved after replication.</text>
</comment>
<comment type="similarity">
    <text evidence="5">Belongs to the herpesviridae UL32 protein family.</text>
</comment>
<evidence type="ECO:0000250" key="1"/>
<evidence type="ECO:0000255" key="2">
    <source>
        <dbReference type="PROSITE-ProRule" id="PRU01332"/>
    </source>
</evidence>
<evidence type="ECO:0000269" key="3">
    <source>
    </source>
</evidence>
<evidence type="ECO:0000269" key="4">
    <source>
    </source>
</evidence>
<evidence type="ECO:0000305" key="5"/>
<accession>F5HF47</accession>
<feature type="chain" id="PRO_0000423766" description="Packaging protein UL32 homolog">
    <location>
        <begin position="1"/>
        <end position="467"/>
    </location>
</feature>
<feature type="region of interest" description="Zinc finger 1" evidence="2">
    <location>
        <begin position="52"/>
        <end position="136"/>
    </location>
</feature>
<feature type="region of interest" description="Zinc finger 3" evidence="2">
    <location>
        <begin position="191"/>
        <end position="452"/>
    </location>
</feature>
<feature type="region of interest" description="Zinc finger 2" evidence="2">
    <location>
        <begin position="296"/>
        <end position="373"/>
    </location>
</feature>
<feature type="binding site" evidence="2">
    <location>
        <position position="52"/>
    </location>
    <ligand>
        <name>Zn(2+)</name>
        <dbReference type="ChEBI" id="CHEBI:29105"/>
        <label>1</label>
    </ligand>
</feature>
<feature type="binding site" evidence="2">
    <location>
        <position position="55"/>
    </location>
    <ligand>
        <name>Zn(2+)</name>
        <dbReference type="ChEBI" id="CHEBI:29105"/>
        <label>1</label>
    </ligand>
</feature>
<feature type="binding site" evidence="2">
    <location>
        <position position="130"/>
    </location>
    <ligand>
        <name>Zn(2+)</name>
        <dbReference type="ChEBI" id="CHEBI:29105"/>
        <label>1</label>
    </ligand>
</feature>
<feature type="binding site" evidence="2">
    <location>
        <position position="136"/>
    </location>
    <ligand>
        <name>Zn(2+)</name>
        <dbReference type="ChEBI" id="CHEBI:29105"/>
        <label>1</label>
    </ligand>
</feature>
<feature type="binding site" evidence="2">
    <location>
        <position position="191"/>
    </location>
    <ligand>
        <name>Zn(2+)</name>
        <dbReference type="ChEBI" id="CHEBI:29105"/>
        <label>3</label>
    </ligand>
</feature>
<feature type="binding site" evidence="2">
    <location>
        <position position="192"/>
    </location>
    <ligand>
        <name>Zn(2+)</name>
        <dbReference type="ChEBI" id="CHEBI:29105"/>
        <label>3</label>
    </ligand>
</feature>
<feature type="binding site" evidence="2">
    <location>
        <position position="296"/>
    </location>
    <ligand>
        <name>Zn(2+)</name>
        <dbReference type="ChEBI" id="CHEBI:29105"/>
        <label>2</label>
    </ligand>
</feature>
<feature type="binding site" evidence="2">
    <location>
        <position position="299"/>
    </location>
    <ligand>
        <name>Zn(2+)</name>
        <dbReference type="ChEBI" id="CHEBI:29105"/>
        <label>2</label>
    </ligand>
</feature>
<feature type="binding site" evidence="2">
    <location>
        <position position="366"/>
    </location>
    <ligand>
        <name>Zn(2+)</name>
        <dbReference type="ChEBI" id="CHEBI:29105"/>
        <label>2</label>
    </ligand>
</feature>
<feature type="binding site" evidence="2">
    <location>
        <position position="373"/>
    </location>
    <ligand>
        <name>Zn(2+)</name>
        <dbReference type="ChEBI" id="CHEBI:29105"/>
        <label>2</label>
    </ligand>
</feature>
<feature type="binding site" evidence="2">
    <location>
        <position position="415"/>
    </location>
    <ligand>
        <name>Zn(2+)</name>
        <dbReference type="ChEBI" id="CHEBI:29105"/>
        <label>3</label>
    </ligand>
</feature>
<feature type="binding site" evidence="2">
    <location>
        <position position="452"/>
    </location>
    <ligand>
        <name>Zn(2+)</name>
        <dbReference type="ChEBI" id="CHEBI:29105"/>
        <label>3</label>
    </ligand>
</feature>
<feature type="mutagenesis site" description="Strong loss of stability." evidence="4">
    <original>C</original>
    <variation>A</variation>
    <location>
        <position position="52"/>
    </location>
</feature>
<feature type="mutagenesis site" description="Strong loss of stability." evidence="4">
    <original>C</original>
    <variation>A</variation>
    <location>
        <position position="373"/>
    </location>
</feature>
<feature type="mutagenesis site" description="Strong loss of stability." evidence="4">
    <original>C</original>
    <variation>A</variation>
    <location>
        <position position="415"/>
    </location>
</feature>
<feature type="mutagenesis site" description="Strong loss of stability." evidence="4">
    <original>H</original>
    <variation>A</variation>
    <location>
        <position position="452"/>
    </location>
</feature>
<organism>
    <name type="scientific">Human herpesvirus 8 type P (isolate GK18)</name>
    <name type="common">HHV-8</name>
    <name type="synonym">Kaposi's sarcoma-associated herpesvirus</name>
    <dbReference type="NCBI Taxonomy" id="868565"/>
    <lineage>
        <taxon>Viruses</taxon>
        <taxon>Duplodnaviria</taxon>
        <taxon>Heunggongvirae</taxon>
        <taxon>Peploviricota</taxon>
        <taxon>Herviviricetes</taxon>
        <taxon>Herpesvirales</taxon>
        <taxon>Orthoherpesviridae</taxon>
        <taxon>Gammaherpesvirinae</taxon>
        <taxon>Rhadinovirus</taxon>
        <taxon>Rhadinovirus humangamma8</taxon>
        <taxon>Human herpesvirus 8</taxon>
    </lineage>
</organism>
<protein>
    <recommendedName>
        <fullName>Packaging protein UL32 homolog</fullName>
    </recommendedName>
</protein>
<keyword id="KW-1035">Host cytoplasm</keyword>
<keyword id="KW-1048">Host nucleus</keyword>
<keyword id="KW-0479">Metal-binding</keyword>
<keyword id="KW-1185">Reference proteome</keyword>
<keyword id="KW-0862">Zinc</keyword>
<keyword id="KW-0863">Zinc-finger</keyword>
<name>UL32_HHV8P</name>
<sequence length="467" mass="51911">MFVPWQLGTITRHRDELQKLLAASLLPEHPEESLGNPIMTQIHQSLQPSSPCRVCQLLFSLVRDSSTPMGFFEDYACLCFFCLYAPHCWTSTMAAAADLCEIMHLHFPEEEATYGLFGPGRLMGIDLQLHFFVQKCFKTTAAEKILGISNLQFLKSEFIRGMLTGTITCNFCFKTSWPRTDKEEATGPTPCCQITDTTTAPASGIPELARATFCGASRPTKPSLLPALIDIWSTSSELLDEPRPRLIASDMSELKSVVASHDPFFSPPLQADTSQGPCLMHPTLGLRYKNGTASVCLLCECLAAHPEAPKALQTLQCEVMGHIENNVKLVDRIAFVLDNPFAMPYVSDPLLRELIRGCTPQEIHKHLFCDPLCALNAKVVSEDVLFRLPREQEYKKLRASAAAGQLLDANTLFDCEVVQTLVFLFKGLQNARVGKTTSLDIIRELTAQLKRHRLDLAHPSQTSHLYA</sequence>